<evidence type="ECO:0000255" key="1">
    <source>
        <dbReference type="PROSITE-ProRule" id="PRU00303"/>
    </source>
</evidence>
<proteinExistence type="inferred from homology"/>
<name>Y248_TREPA</name>
<protein>
    <recommendedName>
        <fullName>Uncharacterized lipoprotein TP_0248</fullName>
    </recommendedName>
</protein>
<gene>
    <name type="ordered locus">TP_0248</name>
</gene>
<reference key="1">
    <citation type="journal article" date="1998" name="Science">
        <title>Complete genome sequence of Treponema pallidum, the syphilis spirochete.</title>
        <authorList>
            <person name="Fraser C.M."/>
            <person name="Norris S.J."/>
            <person name="Weinstock G.M."/>
            <person name="White O."/>
            <person name="Sutton G.G."/>
            <person name="Dodson R.J."/>
            <person name="Gwinn M.L."/>
            <person name="Hickey E.K."/>
            <person name="Clayton R.A."/>
            <person name="Ketchum K.A."/>
            <person name="Sodergren E."/>
            <person name="Hardham J.M."/>
            <person name="McLeod M.P."/>
            <person name="Salzberg S.L."/>
            <person name="Peterson J.D."/>
            <person name="Khalak H.G."/>
            <person name="Richardson D.L."/>
            <person name="Howell J.K."/>
            <person name="Chidambaram M."/>
            <person name="Utterback T.R."/>
            <person name="McDonald L.A."/>
            <person name="Artiach P."/>
            <person name="Bowman C."/>
            <person name="Cotton M.D."/>
            <person name="Fujii C."/>
            <person name="Garland S.A."/>
            <person name="Hatch B."/>
            <person name="Horst K."/>
            <person name="Roberts K.M."/>
            <person name="Sandusky M."/>
            <person name="Weidman J.F."/>
            <person name="Smith H.O."/>
            <person name="Venter J.C."/>
        </authorList>
    </citation>
    <scope>NUCLEOTIDE SEQUENCE [LARGE SCALE GENOMIC DNA]</scope>
    <source>
        <strain>Nichols</strain>
    </source>
</reference>
<sequence length="134" mass="14843">MWHLRCSNWRGSGVFGMCFSLSGCVMGQWCVSRAIVRGHTQGGAVREVVRELLLGPQHHGYARLVDPAVRPLSCFSRGDTLYIDLPVGVLSPKYRTCSLHRAYELXERSVVLNCAPVKRVCFYVGGRAGFESDG</sequence>
<feature type="signal peptide" evidence="1">
    <location>
        <begin position="1"/>
        <end position="23"/>
    </location>
</feature>
<feature type="chain" id="PRO_0000014244" description="Uncharacterized lipoprotein TP_0248">
    <location>
        <begin position="24"/>
        <end position="134"/>
    </location>
</feature>
<feature type="lipid moiety-binding region" description="N-palmitoyl cysteine" evidence="1">
    <location>
        <position position="24"/>
    </location>
</feature>
<feature type="lipid moiety-binding region" description="S-diacylglycerol cysteine" evidence="1">
    <location>
        <position position="24"/>
    </location>
</feature>
<organism>
    <name type="scientific">Treponema pallidum (strain Nichols)</name>
    <dbReference type="NCBI Taxonomy" id="243276"/>
    <lineage>
        <taxon>Bacteria</taxon>
        <taxon>Pseudomonadati</taxon>
        <taxon>Spirochaetota</taxon>
        <taxon>Spirochaetia</taxon>
        <taxon>Spirochaetales</taxon>
        <taxon>Treponemataceae</taxon>
        <taxon>Treponema</taxon>
    </lineage>
</organism>
<accession>O83276</accession>
<dbReference type="EMBL" id="AE000520">
    <property type="protein sequence ID" value="AAC65241.1"/>
    <property type="molecule type" value="Genomic_DNA"/>
</dbReference>
<dbReference type="PIR" id="C71348">
    <property type="entry name" value="C71348"/>
</dbReference>
<dbReference type="RefSeq" id="WP_010881696.1">
    <property type="nucleotide sequence ID" value="NC_000919.1"/>
</dbReference>
<dbReference type="IntAct" id="O83276">
    <property type="interactions" value="2"/>
</dbReference>
<dbReference type="STRING" id="243276.TP_0248"/>
<dbReference type="EnsemblBacteria" id="AAC65241">
    <property type="protein sequence ID" value="AAC65241"/>
    <property type="gene ID" value="TP_0248"/>
</dbReference>
<dbReference type="KEGG" id="tpa:TP_0248"/>
<dbReference type="HOGENOM" id="CLU_1895266_0_0_12"/>
<dbReference type="Proteomes" id="UP000000811">
    <property type="component" value="Chromosome"/>
</dbReference>
<dbReference type="GO" id="GO:0005886">
    <property type="term" value="C:plasma membrane"/>
    <property type="evidence" value="ECO:0007669"/>
    <property type="project" value="UniProtKB-SubCell"/>
</dbReference>
<dbReference type="PROSITE" id="PS51257">
    <property type="entry name" value="PROKAR_LIPOPROTEIN"/>
    <property type="match status" value="1"/>
</dbReference>
<comment type="subcellular location">
    <subcellularLocation>
        <location evidence="1">Cell membrane</location>
        <topology evidence="1">Lipid-anchor</topology>
    </subcellularLocation>
</comment>
<keyword id="KW-1003">Cell membrane</keyword>
<keyword id="KW-0449">Lipoprotein</keyword>
<keyword id="KW-0472">Membrane</keyword>
<keyword id="KW-0564">Palmitate</keyword>
<keyword id="KW-1185">Reference proteome</keyword>
<keyword id="KW-0732">Signal</keyword>